<keyword id="KW-0025">Alternative splicing</keyword>
<keyword id="KW-0067">ATP-binding</keyword>
<keyword id="KW-1003">Cell membrane</keyword>
<keyword id="KW-0963">Cytoplasm</keyword>
<keyword id="KW-0418">Kinase</keyword>
<keyword id="KW-0472">Membrane</keyword>
<keyword id="KW-0547">Nucleotide-binding</keyword>
<keyword id="KW-1185">Reference proteome</keyword>
<keyword id="KW-0727">SH2 domain</keyword>
<keyword id="KW-0728">SH3 domain</keyword>
<keyword id="KW-0808">Transferase</keyword>
<keyword id="KW-0829">Tyrosine-protein kinase</keyword>
<feature type="chain" id="PRO_0000088055" description="Tyrosine-protein kinase abl-1">
    <location>
        <begin position="1"/>
        <end position="1224"/>
    </location>
</feature>
<feature type="domain" description="SH3" evidence="4">
    <location>
        <begin position="115"/>
        <end position="188"/>
    </location>
</feature>
<feature type="domain" description="SH2" evidence="3">
    <location>
        <begin position="194"/>
        <end position="284"/>
    </location>
</feature>
<feature type="domain" description="Protein kinase" evidence="2">
    <location>
        <begin position="311"/>
        <end position="562"/>
    </location>
</feature>
<feature type="region of interest" description="Disordered" evidence="6">
    <location>
        <begin position="579"/>
        <end position="671"/>
    </location>
</feature>
<feature type="region of interest" description="Disordered" evidence="6">
    <location>
        <begin position="736"/>
        <end position="775"/>
    </location>
</feature>
<feature type="region of interest" description="Disordered" evidence="6">
    <location>
        <begin position="796"/>
        <end position="881"/>
    </location>
</feature>
<feature type="region of interest" description="Disordered" evidence="6">
    <location>
        <begin position="914"/>
        <end position="937"/>
    </location>
</feature>
<feature type="region of interest" description="Disordered" evidence="6">
    <location>
        <begin position="968"/>
        <end position="1016"/>
    </location>
</feature>
<feature type="short sequence motif" description="Kinase activation loop" evidence="1">
    <location>
        <begin position="450"/>
        <end position="474"/>
    </location>
</feature>
<feature type="compositionally biased region" description="Basic and acidic residues" evidence="6">
    <location>
        <begin position="579"/>
        <end position="620"/>
    </location>
</feature>
<feature type="compositionally biased region" description="Polar residues" evidence="6">
    <location>
        <begin position="639"/>
        <end position="655"/>
    </location>
</feature>
<feature type="compositionally biased region" description="Polar residues" evidence="6">
    <location>
        <begin position="746"/>
        <end position="760"/>
    </location>
</feature>
<feature type="compositionally biased region" description="Basic and acidic residues" evidence="6">
    <location>
        <begin position="797"/>
        <end position="819"/>
    </location>
</feature>
<feature type="compositionally biased region" description="Basic and acidic residues" evidence="6">
    <location>
        <begin position="864"/>
        <end position="877"/>
    </location>
</feature>
<feature type="compositionally biased region" description="Polar residues" evidence="6">
    <location>
        <begin position="973"/>
        <end position="984"/>
    </location>
</feature>
<feature type="compositionally biased region" description="Basic and acidic residues" evidence="6">
    <location>
        <begin position="1001"/>
        <end position="1016"/>
    </location>
</feature>
<feature type="active site" description="Proton acceptor" evidence="2 5">
    <location>
        <position position="432"/>
    </location>
</feature>
<feature type="binding site" evidence="2">
    <location>
        <begin position="317"/>
        <end position="325"/>
    </location>
    <ligand>
        <name>ATP</name>
        <dbReference type="ChEBI" id="CHEBI:30616"/>
    </ligand>
</feature>
<feature type="binding site" evidence="2">
    <location>
        <position position="340"/>
    </location>
    <ligand>
        <name>ATP</name>
        <dbReference type="ChEBI" id="CHEBI:30616"/>
    </ligand>
</feature>
<feature type="binding site" evidence="2">
    <location>
        <begin position="385"/>
        <end position="391"/>
    </location>
    <ligand>
        <name>ATP</name>
        <dbReference type="ChEBI" id="CHEBI:30616"/>
    </ligand>
</feature>
<feature type="splice variant" id="VSP_004962" description="In isoform c." evidence="9">
    <original>MGHSHSTGKEINDNELFTCEDPVFDQPVASPKSEISSKLAEEIERSKSPLILEVSPRTPDSVQMFRPTFDTFRPPNSDSSTFRGSQSR</original>
    <variation>MIMNPCFRERSQKRTKKRAKNRAKSRSTMYLSKVGDSSLAMSRSLPSVALPMHYLHHKLAESICFITATIDSL</variation>
    <location>
        <begin position="1"/>
        <end position="88"/>
    </location>
</feature>
<feature type="splice variant" id="VSP_004963" description="In isoform b." evidence="9">
    <location>
        <begin position="54"/>
        <end position="63"/>
    </location>
</feature>
<comment type="function">
    <text evidence="7 8">Functions downstream of migratory protein mig-13 and is involved in Q neuroblast migration during larval development (PubMed:27780040). Recruited by mig-13 to the leading edge of Q neuroblasts and their descendents to signal downstream, likely to the wve-1 pathway, and direct migration along the anteroposterior body axis (PubMed:27780040). Promotes germline cell apoptosis in response to oxidative, osmotic and heat shock stresses (PubMed:16729024).</text>
</comment>
<comment type="catalytic activity">
    <reaction evidence="5">
        <text>L-tyrosyl-[protein] + ATP = O-phospho-L-tyrosyl-[protein] + ADP + H(+)</text>
        <dbReference type="Rhea" id="RHEA:10596"/>
        <dbReference type="Rhea" id="RHEA-COMP:10136"/>
        <dbReference type="Rhea" id="RHEA-COMP:20101"/>
        <dbReference type="ChEBI" id="CHEBI:15378"/>
        <dbReference type="ChEBI" id="CHEBI:30616"/>
        <dbReference type="ChEBI" id="CHEBI:46858"/>
        <dbReference type="ChEBI" id="CHEBI:61978"/>
        <dbReference type="ChEBI" id="CHEBI:456216"/>
        <dbReference type="EC" id="2.7.10.2"/>
    </reaction>
</comment>
<comment type="subunit">
    <text evidence="8">Interacts (via SH2 and SH3 domains) with mig-13; the interaction is direct. May interact with soem-1.</text>
</comment>
<comment type="interaction">
    <interactant intactId="EBI-2315883">
        <id>P03949</id>
    </interactant>
    <interactant intactId="EBI-2315902">
        <id>G5EEL1</id>
        <label>alp-1</label>
    </interactant>
    <organismsDiffer>false</organismsDiffer>
    <experiments>4</experiments>
</comment>
<comment type="interaction">
    <interactant intactId="EBI-2315883">
        <id>P03949</id>
    </interactant>
    <interactant intactId="EBI-2316016">
        <id>Q11181</id>
        <label>C05D10.4</label>
    </interactant>
    <organismsDiffer>false</organismsDiffer>
    <experiments>6</experiments>
</comment>
<comment type="interaction">
    <interactant intactId="EBI-2315883">
        <id>P03949</id>
    </interactant>
    <interactant intactId="EBI-2315916">
        <id>G5ED33</id>
        <label>eps-8</label>
    </interactant>
    <organismsDiffer>false</organismsDiffer>
    <experiments>6</experiments>
</comment>
<comment type="interaction">
    <interactant intactId="EBI-2315883">
        <id>P03949</id>
    </interactant>
    <interactant intactId="EBI-2315745">
        <id>Q9TYX9</id>
        <label>M57.1</label>
    </interactant>
    <organismsDiffer>false</organismsDiffer>
    <experiments>4</experiments>
</comment>
<comment type="interaction">
    <interactant intactId="EBI-2315883">
        <id>P03949</id>
    </interactant>
    <interactant intactId="EBI-316403">
        <id>Q22227</id>
        <label>mig-5</label>
    </interactant>
    <organismsDiffer>false</organismsDiffer>
    <experiments>3</experiments>
</comment>
<comment type="interaction">
    <interactant intactId="EBI-2315883">
        <id>P03949</id>
    </interactant>
    <interactant intactId="EBI-327642">
        <id>Q95QA6</id>
        <label>pat-12</label>
    </interactant>
    <organismsDiffer>false</organismsDiffer>
    <experiments>3</experiments>
</comment>
<comment type="interaction">
    <interactant intactId="EBI-2315883">
        <id>P03949</id>
    </interactant>
    <interactant intactId="EBI-318539">
        <id>Q18953</id>
        <label>secs-1</label>
    </interactant>
    <organismsDiffer>false</organismsDiffer>
    <experiments>7</experiments>
</comment>
<comment type="interaction">
    <interactant intactId="EBI-2315883">
        <id>P03949</id>
    </interactant>
    <interactant intactId="EBI-311928">
        <id>G5EF87</id>
        <label>swsn-1</label>
    </interactant>
    <organismsDiffer>false</organismsDiffer>
    <experiments>5</experiments>
</comment>
<comment type="interaction">
    <interactant intactId="EBI-2315883">
        <id>P03949</id>
    </interactant>
    <interactant intactId="EBI-327120">
        <id>Q18320</id>
        <label>szy-4</label>
    </interactant>
    <organismsDiffer>false</organismsDiffer>
    <experiments>3</experiments>
</comment>
<comment type="interaction">
    <interactant intactId="EBI-2315883">
        <id>P03949</id>
    </interactant>
    <interactant intactId="EBI-319610">
        <id>G5EDS1</id>
        <label>vab-3</label>
    </interactant>
    <organismsDiffer>false</organismsDiffer>
    <experiments>4</experiments>
</comment>
<comment type="interaction">
    <interactant intactId="EBI-2315883">
        <id>P03949</id>
    </interactant>
    <interactant intactId="EBI-2315779">
        <id>O02174</id>
        <label>zfp-3</label>
    </interactant>
    <organismsDiffer>false</organismsDiffer>
    <experiments>5</experiments>
</comment>
<comment type="subcellular location">
    <subcellularLocation>
        <location evidence="8">Cell membrane</location>
    </subcellularLocation>
    <subcellularLocation>
        <location evidence="8">Cytoplasm</location>
    </subcellularLocation>
    <text evidence="8">Enriched at the leading edge compared to cytoplasm. Targeted to the leading edge of Q neuroblasts by mig-13.</text>
</comment>
<comment type="alternative products">
    <event type="alternative splicing"/>
    <isoform>
        <id>P03949-1</id>
        <name>a</name>
        <sequence type="displayed"/>
    </isoform>
    <isoform>
        <id>P03949-2</id>
        <name>b</name>
        <sequence type="described" ref="VSP_004963"/>
    </isoform>
    <isoform>
        <id>P03949-3</id>
        <name>c</name>
        <sequence type="described" ref="VSP_004962"/>
    </isoform>
    <text>Experimental confirmation may be lacking for some isoforms.</text>
</comment>
<comment type="similarity">
    <text evidence="2">Belongs to the protein kinase superfamily. Tyr protein kinase family. ABL subfamily.</text>
</comment>
<dbReference type="EC" id="2.7.10.2"/>
<dbReference type="EMBL" id="Z50806">
    <property type="protein sequence ID" value="CAA90691.2"/>
    <property type="molecule type" value="Genomic_DNA"/>
</dbReference>
<dbReference type="EMBL" id="Z50806">
    <property type="protein sequence ID" value="CAB60296.2"/>
    <property type="molecule type" value="Genomic_DNA"/>
</dbReference>
<dbReference type="EMBL" id="Z50806">
    <property type="protein sequence ID" value="CAB60297.2"/>
    <property type="molecule type" value="Genomic_DNA"/>
</dbReference>
<dbReference type="EMBL" id="M13235">
    <property type="protein sequence ID" value="AAA28129.1"/>
    <property type="molecule type" value="Genomic_DNA"/>
</dbReference>
<dbReference type="PIR" id="T23832">
    <property type="entry name" value="T23832"/>
</dbReference>
<dbReference type="RefSeq" id="NP_509777.2">
    <molecule id="P03949-2"/>
    <property type="nucleotide sequence ID" value="NM_077376.6"/>
</dbReference>
<dbReference type="RefSeq" id="NP_509778.2">
    <molecule id="P03949-1"/>
    <property type="nucleotide sequence ID" value="NM_077377.4"/>
</dbReference>
<dbReference type="RefSeq" id="NP_509779.2">
    <molecule id="P03949-3"/>
    <property type="nucleotide sequence ID" value="NM_077378.2"/>
</dbReference>
<dbReference type="SMR" id="P03949"/>
<dbReference type="BioGRID" id="46173">
    <property type="interactions" value="51"/>
</dbReference>
<dbReference type="DIP" id="DIP-48409N"/>
<dbReference type="FunCoup" id="P03949">
    <property type="interactions" value="1746"/>
</dbReference>
<dbReference type="IntAct" id="P03949">
    <property type="interactions" value="45"/>
</dbReference>
<dbReference type="STRING" id="6239.M79.1a.1"/>
<dbReference type="iPTMnet" id="P03949"/>
<dbReference type="PaxDb" id="6239-M79.1a"/>
<dbReference type="EnsemblMetazoa" id="M79.1a.1">
    <molecule id="P03949-1"/>
    <property type="protein sequence ID" value="M79.1a.1"/>
    <property type="gene ID" value="WBGene00000018"/>
</dbReference>
<dbReference type="EnsemblMetazoa" id="M79.1b.1">
    <molecule id="P03949-2"/>
    <property type="protein sequence ID" value="M79.1b.1"/>
    <property type="gene ID" value="WBGene00000018"/>
</dbReference>
<dbReference type="EnsemblMetazoa" id="M79.1c.1">
    <molecule id="P03949-3"/>
    <property type="protein sequence ID" value="M79.1c.1"/>
    <property type="gene ID" value="WBGene00000018"/>
</dbReference>
<dbReference type="GeneID" id="181261"/>
<dbReference type="KEGG" id="cel:CELE_M79.1"/>
<dbReference type="UCSC" id="M79.1b">
    <molecule id="P03949-1"/>
    <property type="organism name" value="c. elegans"/>
</dbReference>
<dbReference type="AGR" id="WB:WBGene00000018"/>
<dbReference type="CTD" id="181261"/>
<dbReference type="WormBase" id="M79.1a">
    <molecule id="P03949-1"/>
    <property type="protein sequence ID" value="CE31570"/>
    <property type="gene ID" value="WBGene00000018"/>
    <property type="gene designation" value="abl-1"/>
</dbReference>
<dbReference type="WormBase" id="M79.1b">
    <molecule id="P03949-2"/>
    <property type="protein sequence ID" value="CE31571"/>
    <property type="gene ID" value="WBGene00000018"/>
    <property type="gene designation" value="abl-1"/>
</dbReference>
<dbReference type="WormBase" id="M79.1c">
    <molecule id="P03949-3"/>
    <property type="protein sequence ID" value="CE31572"/>
    <property type="gene ID" value="WBGene00000018"/>
    <property type="gene designation" value="abl-1"/>
</dbReference>
<dbReference type="eggNOG" id="KOG4278">
    <property type="taxonomic scope" value="Eukaryota"/>
</dbReference>
<dbReference type="GeneTree" id="ENSGT00940000173757"/>
<dbReference type="InParanoid" id="P03949"/>
<dbReference type="OMA" id="EWCEARL"/>
<dbReference type="OrthoDB" id="98077at2759"/>
<dbReference type="BRENDA" id="2.7.10.2">
    <property type="organism ID" value="1045"/>
</dbReference>
<dbReference type="Reactome" id="R-CEL-2029482">
    <property type="pathway name" value="Regulation of actin dynamics for phagocytic cup formation"/>
</dbReference>
<dbReference type="Reactome" id="R-CEL-5663213">
    <property type="pathway name" value="RHO GTPases Activate WASPs and WAVEs"/>
</dbReference>
<dbReference type="Reactome" id="R-CEL-8939236">
    <property type="pathway name" value="RUNX1 regulates transcription of genes involved in differentiation of HSCs"/>
</dbReference>
<dbReference type="Reactome" id="R-CEL-9013149">
    <property type="pathway name" value="RAC1 GTPase cycle"/>
</dbReference>
<dbReference type="Reactome" id="R-CEL-9013423">
    <property type="pathway name" value="RAC3 GTPase cycle"/>
</dbReference>
<dbReference type="Reactome" id="R-CEL-9841922">
    <property type="pathway name" value="MLL4 and MLL3 complexes regulate expression of PPARG target genes in adipogenesis and hepatic steatosis"/>
</dbReference>
<dbReference type="Reactome" id="R-CEL-9860927">
    <property type="pathway name" value="Turbulent (oscillatory, disturbed) flow shear stress activates signaling by PIEZO1 and integrins in endothelial cells"/>
</dbReference>
<dbReference type="SignaLink" id="P03949"/>
<dbReference type="PRO" id="PR:P03949"/>
<dbReference type="Proteomes" id="UP000001940">
    <property type="component" value="Chromosome X"/>
</dbReference>
<dbReference type="Bgee" id="WBGene00000018">
    <property type="expression patterns" value="Expressed in pharyngeal muscle cell (C elegans) and 9 other cell types or tissues"/>
</dbReference>
<dbReference type="ExpressionAtlas" id="P03949">
    <property type="expression patterns" value="baseline and differential"/>
</dbReference>
<dbReference type="GO" id="GO:0005737">
    <property type="term" value="C:cytoplasm"/>
    <property type="evidence" value="ECO:0000250"/>
    <property type="project" value="WormBase"/>
</dbReference>
<dbReference type="GO" id="GO:0005886">
    <property type="term" value="C:plasma membrane"/>
    <property type="evidence" value="ECO:0000318"/>
    <property type="project" value="GO_Central"/>
</dbReference>
<dbReference type="GO" id="GO:0005524">
    <property type="term" value="F:ATP binding"/>
    <property type="evidence" value="ECO:0007669"/>
    <property type="project" value="UniProtKB-KW"/>
</dbReference>
<dbReference type="GO" id="GO:0004715">
    <property type="term" value="F:non-membrane spanning protein tyrosine kinase activity"/>
    <property type="evidence" value="ECO:0000250"/>
    <property type="project" value="WormBase"/>
</dbReference>
<dbReference type="GO" id="GO:0004713">
    <property type="term" value="F:protein tyrosine kinase activity"/>
    <property type="evidence" value="ECO:0000318"/>
    <property type="project" value="GO_Central"/>
</dbReference>
<dbReference type="GO" id="GO:0050832">
    <property type="term" value="P:defense response to fungus"/>
    <property type="evidence" value="ECO:0000315"/>
    <property type="project" value="WormBase"/>
</dbReference>
<dbReference type="GO" id="GO:0050829">
    <property type="term" value="P:defense response to Gram-negative bacterium"/>
    <property type="evidence" value="ECO:0000316"/>
    <property type="project" value="WormBase"/>
</dbReference>
<dbReference type="GO" id="GO:0000077">
    <property type="term" value="P:DNA damage checkpoint signaling"/>
    <property type="evidence" value="ECO:0000316"/>
    <property type="project" value="WormBase"/>
</dbReference>
<dbReference type="GO" id="GO:0043066">
    <property type="term" value="P:negative regulation of apoptotic process"/>
    <property type="evidence" value="ECO:0000315"/>
    <property type="project" value="WormBase"/>
</dbReference>
<dbReference type="GO" id="GO:0030336">
    <property type="term" value="P:negative regulation of cell migration"/>
    <property type="evidence" value="ECO:0000316"/>
    <property type="project" value="WormBase"/>
</dbReference>
<dbReference type="GO" id="GO:0043518">
    <property type="term" value="P:negative regulation of DNA damage response, signal transduction by p53 class mediator"/>
    <property type="evidence" value="ECO:0000315"/>
    <property type="project" value="WormBase"/>
</dbReference>
<dbReference type="GO" id="GO:1901075">
    <property type="term" value="P:negative regulation of engulfment of apoptotic cell"/>
    <property type="evidence" value="ECO:0000316"/>
    <property type="project" value="WormBase"/>
</dbReference>
<dbReference type="GO" id="GO:0010212">
    <property type="term" value="P:response to ionizing radiation"/>
    <property type="evidence" value="ECO:0000315"/>
    <property type="project" value="WormBase"/>
</dbReference>
<dbReference type="GO" id="GO:0007283">
    <property type="term" value="P:spermatogenesis"/>
    <property type="evidence" value="ECO:0000315"/>
    <property type="project" value="WormBase"/>
</dbReference>
<dbReference type="CDD" id="cd05052">
    <property type="entry name" value="PTKc_Abl"/>
    <property type="match status" value="1"/>
</dbReference>
<dbReference type="CDD" id="cd09935">
    <property type="entry name" value="SH2_ABL"/>
    <property type="match status" value="1"/>
</dbReference>
<dbReference type="CDD" id="cd11850">
    <property type="entry name" value="SH3_Abl"/>
    <property type="match status" value="1"/>
</dbReference>
<dbReference type="FunFam" id="1.10.510.10:FF:000630">
    <property type="entry name" value="Tyrosine-protein kinase"/>
    <property type="match status" value="1"/>
</dbReference>
<dbReference type="FunFam" id="2.30.30.40:FF:000010">
    <property type="entry name" value="Tyrosine-protein kinase"/>
    <property type="match status" value="1"/>
</dbReference>
<dbReference type="FunFam" id="3.30.200.20:FF:000037">
    <property type="entry name" value="Tyrosine-protein kinase"/>
    <property type="match status" value="1"/>
</dbReference>
<dbReference type="FunFam" id="3.30.505.10:FF:000004">
    <property type="entry name" value="Tyrosine-protein kinase"/>
    <property type="match status" value="1"/>
</dbReference>
<dbReference type="Gene3D" id="1.20.120.330">
    <property type="entry name" value="Nucleotidyltransferases domain 2"/>
    <property type="match status" value="1"/>
</dbReference>
<dbReference type="Gene3D" id="3.30.200.20">
    <property type="entry name" value="Phosphorylase Kinase, domain 1"/>
    <property type="match status" value="1"/>
</dbReference>
<dbReference type="Gene3D" id="3.30.505.10">
    <property type="entry name" value="SH2 domain"/>
    <property type="match status" value="1"/>
</dbReference>
<dbReference type="Gene3D" id="2.30.30.40">
    <property type="entry name" value="SH3 Domains"/>
    <property type="match status" value="1"/>
</dbReference>
<dbReference type="Gene3D" id="1.10.510.10">
    <property type="entry name" value="Transferase(Phosphotransferase) domain 1"/>
    <property type="match status" value="1"/>
</dbReference>
<dbReference type="InterPro" id="IPR035837">
    <property type="entry name" value="ABL_SH2"/>
</dbReference>
<dbReference type="InterPro" id="IPR015015">
    <property type="entry name" value="F-actin-binding"/>
</dbReference>
<dbReference type="InterPro" id="IPR011009">
    <property type="entry name" value="Kinase-like_dom_sf"/>
</dbReference>
<dbReference type="InterPro" id="IPR050198">
    <property type="entry name" value="Non-receptor_tyrosine_kinases"/>
</dbReference>
<dbReference type="InterPro" id="IPR000719">
    <property type="entry name" value="Prot_kinase_dom"/>
</dbReference>
<dbReference type="InterPro" id="IPR017441">
    <property type="entry name" value="Protein_kinase_ATP_BS"/>
</dbReference>
<dbReference type="InterPro" id="IPR001245">
    <property type="entry name" value="Ser-Thr/Tyr_kinase_cat_dom"/>
</dbReference>
<dbReference type="InterPro" id="IPR000980">
    <property type="entry name" value="SH2"/>
</dbReference>
<dbReference type="InterPro" id="IPR036860">
    <property type="entry name" value="SH2_dom_sf"/>
</dbReference>
<dbReference type="InterPro" id="IPR036028">
    <property type="entry name" value="SH3-like_dom_sf"/>
</dbReference>
<dbReference type="InterPro" id="IPR001452">
    <property type="entry name" value="SH3_domain"/>
</dbReference>
<dbReference type="InterPro" id="IPR008266">
    <property type="entry name" value="Tyr_kinase_AS"/>
</dbReference>
<dbReference type="InterPro" id="IPR020635">
    <property type="entry name" value="Tyr_kinase_cat_dom"/>
</dbReference>
<dbReference type="PANTHER" id="PTHR24418">
    <property type="entry name" value="TYROSINE-PROTEIN KINASE"/>
    <property type="match status" value="1"/>
</dbReference>
<dbReference type="Pfam" id="PF08919">
    <property type="entry name" value="F_actin_bind"/>
    <property type="match status" value="1"/>
</dbReference>
<dbReference type="Pfam" id="PF07714">
    <property type="entry name" value="PK_Tyr_Ser-Thr"/>
    <property type="match status" value="1"/>
</dbReference>
<dbReference type="Pfam" id="PF00017">
    <property type="entry name" value="SH2"/>
    <property type="match status" value="1"/>
</dbReference>
<dbReference type="Pfam" id="PF00018">
    <property type="entry name" value="SH3_1"/>
    <property type="match status" value="1"/>
</dbReference>
<dbReference type="PRINTS" id="PR00401">
    <property type="entry name" value="SH2DOMAIN"/>
</dbReference>
<dbReference type="PRINTS" id="PR00452">
    <property type="entry name" value="SH3DOMAIN"/>
</dbReference>
<dbReference type="PRINTS" id="PR00109">
    <property type="entry name" value="TYRKINASE"/>
</dbReference>
<dbReference type="SMART" id="SM00808">
    <property type="entry name" value="FABD"/>
    <property type="match status" value="1"/>
</dbReference>
<dbReference type="SMART" id="SM00252">
    <property type="entry name" value="SH2"/>
    <property type="match status" value="1"/>
</dbReference>
<dbReference type="SMART" id="SM00326">
    <property type="entry name" value="SH3"/>
    <property type="match status" value="1"/>
</dbReference>
<dbReference type="SMART" id="SM00219">
    <property type="entry name" value="TyrKc"/>
    <property type="match status" value="1"/>
</dbReference>
<dbReference type="SUPFAM" id="SSF56112">
    <property type="entry name" value="Protein kinase-like (PK-like)"/>
    <property type="match status" value="1"/>
</dbReference>
<dbReference type="SUPFAM" id="SSF55550">
    <property type="entry name" value="SH2 domain"/>
    <property type="match status" value="1"/>
</dbReference>
<dbReference type="SUPFAM" id="SSF50044">
    <property type="entry name" value="SH3-domain"/>
    <property type="match status" value="1"/>
</dbReference>
<dbReference type="PROSITE" id="PS00107">
    <property type="entry name" value="PROTEIN_KINASE_ATP"/>
    <property type="match status" value="1"/>
</dbReference>
<dbReference type="PROSITE" id="PS50011">
    <property type="entry name" value="PROTEIN_KINASE_DOM"/>
    <property type="match status" value="1"/>
</dbReference>
<dbReference type="PROSITE" id="PS00109">
    <property type="entry name" value="PROTEIN_KINASE_TYR"/>
    <property type="match status" value="1"/>
</dbReference>
<dbReference type="PROSITE" id="PS50001">
    <property type="entry name" value="SH2"/>
    <property type="match status" value="1"/>
</dbReference>
<dbReference type="PROSITE" id="PS50002">
    <property type="entry name" value="SH3"/>
    <property type="match status" value="1"/>
</dbReference>
<accession>P03949</accession>
<accession>Q9U3A2</accession>
<accession>Q9U3A3</accession>
<evidence type="ECO:0000250" key="1"/>
<evidence type="ECO:0000255" key="2">
    <source>
        <dbReference type="PROSITE-ProRule" id="PRU00159"/>
    </source>
</evidence>
<evidence type="ECO:0000255" key="3">
    <source>
        <dbReference type="PROSITE-ProRule" id="PRU00191"/>
    </source>
</evidence>
<evidence type="ECO:0000255" key="4">
    <source>
        <dbReference type="PROSITE-ProRule" id="PRU00192"/>
    </source>
</evidence>
<evidence type="ECO:0000255" key="5">
    <source>
        <dbReference type="PROSITE-ProRule" id="PRU10028"/>
    </source>
</evidence>
<evidence type="ECO:0000256" key="6">
    <source>
        <dbReference type="SAM" id="MobiDB-lite"/>
    </source>
</evidence>
<evidence type="ECO:0000269" key="7">
    <source>
    </source>
</evidence>
<evidence type="ECO:0000269" key="8">
    <source>
    </source>
</evidence>
<evidence type="ECO:0000305" key="9"/>
<proteinExistence type="evidence at protein level"/>
<sequence length="1224" mass="138326">MGHSHSTGKEINDNELFTCEDPVFDQPVASPKSEISSKLAEEIERSKSPLILEVSPRTPDSVQMFRPTFDTFRPPNSDSSTFRGSQSREDLVACSSMNSVNNVHDMNTVSSSSSSSAPLFVALYDFHGVGEEQLSLRKGDQVRILGYNKNNEWCEARLYSTRKNDASNQRRLGEIGWVPSNFIAPYNSLDKYTWYHGKISRSDSEAILGSGITGSFLVRESETSIGQYTISVRHDGRVFHYRINVDNTEKMFITQEVKFRTLGELVHHHSVHADGLICLLMYPASKKDKGRGLFSLSPNAPDEWELDRSEIIMHNKLGGGQYGDVYEGYWKRHDCTIAVKALKEDAMPLHEFLAEAAIMKDLHHKNLVRLLGVCTHEAPFYIITEFMCNGNLLEYLRRTDKSLLPPIILVQMASQIASGMSYLEARHFIHRDLAARNCLVSEHNIVKIADFGLARFMKEDTYTAHAGAKFPIKWTAPEGLAFNTFSSKSDVWAFGVLLWEIATYGMAPYPGVELSNVYGLLENGFRMDGPQGCPPSVYRLMLQCWNWSPSDRPRFRDIHFNLENLISSNSLNDEVQKQLKKNNDKKLESDKRRSNVRERSDSKSRHSSHHDRDRDRESLHSRNSNPEIPNRSFIRTDDSVSFFNPSTTSKVTSFRAQGPPFPPPPQQNTKPKLLKSVLNSNARHASEEFERNEQDDVVPLAEKNVRKAVTRLGGTMPKGQRIDAYLDSMRRVDSWKESTDADNEGAGSSSLSRTVSNDSLDTLPLPDSMNSSTYVKMHPASGENVFLRQIRSKLKKRSETPELDHIDSDTADETTKSEKSPFGSLNKSSIKYPIKNAPEFSENHSRVSPVPVPPSRNASVSVRPDSKAEDSSDETTKDVGMWGPKHAVTRKIEIVKNDSYPNVEGELKAKIRNLRHVPKEESNTSSQEDLPLDATDNTNDSIIVIPRDEKAKVRQLVTQKVSPLQHHRPFSLQCPNNSTSSAISHSEHADSSETSSLSGVYEERMKPELPRKRSNGDTKVVPVTWIINGEKEPNGMARTKSLRDITSKFEQLGTASTIESKIEEAVPYREHALEKKGTSKRFSMLEGSNELKHVVPPRKNRNQDESGSIDEEPVSKDMIVSLLKVIQKEFVNLFNLASSEITDEKLQQFVIMADNVQKLHSTCSVYAEQISPHSKFRFKELLSQLEIYNRQIKFSHNPRAKPVDDKLKMAFQDCFDQIMRLVDR</sequence>
<protein>
    <recommendedName>
        <fullName>Tyrosine-protein kinase abl-1</fullName>
        <ecNumber>2.7.10.2</ecNumber>
    </recommendedName>
</protein>
<organism>
    <name type="scientific">Caenorhabditis elegans</name>
    <dbReference type="NCBI Taxonomy" id="6239"/>
    <lineage>
        <taxon>Eukaryota</taxon>
        <taxon>Metazoa</taxon>
        <taxon>Ecdysozoa</taxon>
        <taxon>Nematoda</taxon>
        <taxon>Chromadorea</taxon>
        <taxon>Rhabditida</taxon>
        <taxon>Rhabditina</taxon>
        <taxon>Rhabditomorpha</taxon>
        <taxon>Rhabditoidea</taxon>
        <taxon>Rhabditidae</taxon>
        <taxon>Peloderinae</taxon>
        <taxon>Caenorhabditis</taxon>
    </lineage>
</organism>
<gene>
    <name type="primary">abl-1</name>
    <name type="ORF">M79.1</name>
</gene>
<reference key="1">
    <citation type="journal article" date="1998" name="Science">
        <title>Genome sequence of the nematode C. elegans: a platform for investigating biology.</title>
        <authorList>
            <consortium name="The C. elegans sequencing consortium"/>
        </authorList>
    </citation>
    <scope>NUCLEOTIDE SEQUENCE [LARGE SCALE GENOMIC DNA]</scope>
    <scope>ALTERNATIVE SPLICING</scope>
    <source>
        <strain>Bristol N2</strain>
    </source>
</reference>
<reference key="2">
    <citation type="journal article" date="1986" name="Proc. Natl. Acad. Sci. U.S.A.">
        <title>Isolation and characterization of Caenorhabditis elegans DNA sequences homologous to the v-abl oncogene.</title>
        <authorList>
            <person name="Goddard J.M."/>
            <person name="Weiland J.J."/>
            <person name="Capecchi M.R."/>
        </authorList>
    </citation>
    <scope>NUCLEOTIDE SEQUENCE [GENOMIC DNA] OF 150-706</scope>
</reference>
<reference key="3">
    <citation type="journal article" date="2006" name="Cell Death Differ.">
        <title>Stress-induced germ cell apoptosis by a p53 independent pathway in Caenorhabditis elegans.</title>
        <authorList>
            <person name="Salinas L.S."/>
            <person name="Maldonado E."/>
            <person name="Navarro R.E."/>
        </authorList>
    </citation>
    <scope>FUNCTION</scope>
</reference>
<reference key="4">
    <citation type="journal article" date="2016" name="Dev. Cell">
        <title>Functional coordination of WAVE and WASP in C. elegans neuroblast migration.</title>
        <authorList>
            <person name="Zhu Z."/>
            <person name="Chai Y."/>
            <person name="Jiang Y."/>
            <person name="Li W."/>
            <person name="Hu H."/>
            <person name="Li W."/>
            <person name="Wu J.W."/>
            <person name="Wang Z.X."/>
            <person name="Huang S."/>
            <person name="Ou G."/>
        </authorList>
    </citation>
    <scope>FUNCTION</scope>
    <scope>INTERACTION WITH MIG-13 AND SOEM-1</scope>
    <scope>SUBCELLULAR LOCATION</scope>
</reference>
<name>ABL1_CAEEL</name>